<proteinExistence type="evidence at transcript level"/>
<keyword id="KW-0007">Acetylation</keyword>
<keyword id="KW-0539">Nucleus</keyword>
<keyword id="KW-1185">Reference proteome</keyword>
<keyword id="KW-0833">Ubl conjugation pathway</keyword>
<reference key="1">
    <citation type="submission" date="2005-08" db="EMBL/GenBank/DDBJ databases">
        <authorList>
            <consortium name="NIH - Mammalian Gene Collection (MGC) project"/>
        </authorList>
    </citation>
    <scope>NUCLEOTIDE SEQUENCE [LARGE SCALE MRNA]</scope>
    <source>
        <strain>Hereford</strain>
        <tissue>Fetal liver</tissue>
    </source>
</reference>
<accession>Q3SZ52</accession>
<organism>
    <name type="scientific">Bos taurus</name>
    <name type="common">Bovine</name>
    <dbReference type="NCBI Taxonomy" id="9913"/>
    <lineage>
        <taxon>Eukaryota</taxon>
        <taxon>Metazoa</taxon>
        <taxon>Chordata</taxon>
        <taxon>Craniata</taxon>
        <taxon>Vertebrata</taxon>
        <taxon>Euteleostomi</taxon>
        <taxon>Mammalia</taxon>
        <taxon>Eutheria</taxon>
        <taxon>Laurasiatheria</taxon>
        <taxon>Artiodactyla</taxon>
        <taxon>Ruminantia</taxon>
        <taxon>Pecora</taxon>
        <taxon>Bovidae</taxon>
        <taxon>Bovinae</taxon>
        <taxon>Bos</taxon>
    </lineage>
</organism>
<sequence>MAATTGSGVKVPRNFRLLEELEEGQKGVGDGTVSWGLEDDEDMTLTRWTGMIIGPPRTIYENRIYSLKIECGPKYPEAPPFVRFVTKINMNGVNSSNGVVDPRAISVLAKWQNSYSIKVVLQELRRLMMSKENMKLPQPPEGQCYSN</sequence>
<protein>
    <recommendedName>
        <fullName>Ubiquitin-conjugating enzyme E2 variant 1</fullName>
        <shortName>UEV-1</shortName>
    </recommendedName>
</protein>
<gene>
    <name type="primary">UBE2V1</name>
</gene>
<name>UB2V1_BOVIN</name>
<feature type="initiator methionine" description="Removed" evidence="2">
    <location>
        <position position="1"/>
    </location>
</feature>
<feature type="chain" id="PRO_0000245042" description="Ubiquitin-conjugating enzyme E2 variant 1">
    <location>
        <begin position="2"/>
        <end position="147"/>
    </location>
</feature>
<feature type="domain" description="UBC core" evidence="3">
    <location>
        <begin position="12"/>
        <end position="147"/>
    </location>
</feature>
<feature type="modified residue" description="N-acetylalanine" evidence="2">
    <location>
        <position position="2"/>
    </location>
</feature>
<comment type="function">
    <text evidence="1 2">Has no ubiquitin ligase activity on its own. The UBE2V1-UBE2N heterodimer catalyzes the synthesis of non-canonical poly-ubiquitin chains that are linked through 'Lys-63'. This type of poly-ubiquitination activates IKK and does not seem to involve protein degradation by the proteasome. Plays a role in the activation of NF-kappa-B mediated by IL1B, TNF, TRAF6 and TRAF2. Mediates transcriptional activation of target genes. Plays a role in the control of progress through the cell cycle and differentiation. Plays a role in the error-free DNA repair pathway and contributes to the survival of cells after DNA damage (By similarity). Promotes TRIM5 capsid-specific restriction activity and the UBE2V1-UBE2N heterodimer acts in concert with TRIM5 to generate 'Lys-63'-linked polyubiquitin chains which activate the MAP3K7/TAK1 complex which in turn results in the induction and expression of NF-kappa-B and MAPK-responsive inflammatory genes (By similarity). Together with RNF135 and UBE2N, catalyzes the viral RNA-dependent 'Lys-63'-linked polyubiquitination of RIGI to activate the downstream signaling pathway that leads to interferon beta production (By similarity). UBE2V1-UBE2N together with TRAF3IP2 E3 ubiquitin ligase mediate 'Lys-63'-linked polyubiquitination of TRAF6, a component of IL17A-mediated signaling pathway.</text>
</comment>
<comment type="subunit">
    <text evidence="1">Heterodimer with UBE2N. Interacts (UBE2V2-UBE2N heterodimer) with the E3 ligase STUB1 (via the U-box domain); the complex has a specific 'Lys-63'-linked polyubiquitination activity. Interacts with TRAF6 (By similarity).</text>
</comment>
<comment type="subcellular location">
    <subcellularLocation>
        <location evidence="1">Nucleus</location>
    </subcellularLocation>
    <text evidence="1">Excluded from the nucleolus.</text>
</comment>
<comment type="similarity">
    <text evidence="3">Belongs to the ubiquitin-conjugating enzyme family.</text>
</comment>
<evidence type="ECO:0000250" key="1"/>
<evidence type="ECO:0000250" key="2">
    <source>
        <dbReference type="UniProtKB" id="Q13404"/>
    </source>
</evidence>
<evidence type="ECO:0000255" key="3">
    <source>
        <dbReference type="PROSITE-ProRule" id="PRU00388"/>
    </source>
</evidence>
<dbReference type="EMBL" id="BC103134">
    <property type="protein sequence ID" value="AAI03135.1"/>
    <property type="molecule type" value="mRNA"/>
</dbReference>
<dbReference type="RefSeq" id="NP_001030574.1">
    <property type="nucleotide sequence ID" value="NM_001035497.1"/>
</dbReference>
<dbReference type="BMRB" id="Q3SZ52"/>
<dbReference type="SMR" id="Q3SZ52"/>
<dbReference type="FunCoup" id="Q3SZ52">
    <property type="interactions" value="4262"/>
</dbReference>
<dbReference type="STRING" id="9913.ENSBTAP00000038955"/>
<dbReference type="PaxDb" id="9913-ENSBTAP00000038955"/>
<dbReference type="PeptideAtlas" id="Q3SZ52"/>
<dbReference type="GeneID" id="617771"/>
<dbReference type="KEGG" id="bta:617771"/>
<dbReference type="CTD" id="7335"/>
<dbReference type="eggNOG" id="KOG0896">
    <property type="taxonomic scope" value="Eukaryota"/>
</dbReference>
<dbReference type="HOGENOM" id="CLU_063065_3_0_1"/>
<dbReference type="InParanoid" id="Q3SZ52"/>
<dbReference type="OrthoDB" id="6508832at2759"/>
<dbReference type="TreeFam" id="TF316971"/>
<dbReference type="Proteomes" id="UP000009136">
    <property type="component" value="Unplaced"/>
</dbReference>
<dbReference type="GO" id="GO:0005634">
    <property type="term" value="C:nucleus"/>
    <property type="evidence" value="ECO:0000318"/>
    <property type="project" value="GO_Central"/>
</dbReference>
<dbReference type="GO" id="GO:0031372">
    <property type="term" value="C:UBC13-MMS2 complex"/>
    <property type="evidence" value="ECO:0000250"/>
    <property type="project" value="UniProtKB"/>
</dbReference>
<dbReference type="GO" id="GO:0031371">
    <property type="term" value="C:ubiquitin conjugating enzyme complex"/>
    <property type="evidence" value="ECO:0000318"/>
    <property type="project" value="GO_Central"/>
</dbReference>
<dbReference type="GO" id="GO:0000151">
    <property type="term" value="C:ubiquitin ligase complex"/>
    <property type="evidence" value="ECO:0000250"/>
    <property type="project" value="UniProtKB"/>
</dbReference>
<dbReference type="GO" id="GO:0006301">
    <property type="term" value="P:postreplication repair"/>
    <property type="evidence" value="ECO:0000318"/>
    <property type="project" value="GO_Central"/>
</dbReference>
<dbReference type="GO" id="GO:0070534">
    <property type="term" value="P:protein K63-linked ubiquitination"/>
    <property type="evidence" value="ECO:0000250"/>
    <property type="project" value="UniProtKB"/>
</dbReference>
<dbReference type="CDD" id="cd23807">
    <property type="entry name" value="UEV_UBE2V"/>
    <property type="match status" value="1"/>
</dbReference>
<dbReference type="FunFam" id="3.10.110.10:FF:000012">
    <property type="entry name" value="Ubiquitin-conjugating enzyme E2 variant 2"/>
    <property type="match status" value="1"/>
</dbReference>
<dbReference type="Gene3D" id="3.10.110.10">
    <property type="entry name" value="Ubiquitin Conjugating Enzyme"/>
    <property type="match status" value="1"/>
</dbReference>
<dbReference type="InterPro" id="IPR000608">
    <property type="entry name" value="UBQ-conjugat_E2_core"/>
</dbReference>
<dbReference type="InterPro" id="IPR016135">
    <property type="entry name" value="UBQ-conjugating_enzyme/RWD"/>
</dbReference>
<dbReference type="PANTHER" id="PTHR24068">
    <property type="entry name" value="UBIQUITIN-CONJUGATING ENZYME E2"/>
    <property type="match status" value="1"/>
</dbReference>
<dbReference type="Pfam" id="PF00179">
    <property type="entry name" value="UQ_con"/>
    <property type="match status" value="1"/>
</dbReference>
<dbReference type="SMART" id="SM00212">
    <property type="entry name" value="UBCc"/>
    <property type="match status" value="1"/>
</dbReference>
<dbReference type="SUPFAM" id="SSF54495">
    <property type="entry name" value="UBC-like"/>
    <property type="match status" value="1"/>
</dbReference>
<dbReference type="PROSITE" id="PS50127">
    <property type="entry name" value="UBC_2"/>
    <property type="match status" value="1"/>
</dbReference>